<accession>Q6P298</accession>
<accession>Q561P6</accession>
<organism>
    <name type="scientific">Danio rerio</name>
    <name type="common">Zebrafish</name>
    <name type="synonym">Brachydanio rerio</name>
    <dbReference type="NCBI Taxonomy" id="7955"/>
    <lineage>
        <taxon>Eukaryota</taxon>
        <taxon>Metazoa</taxon>
        <taxon>Chordata</taxon>
        <taxon>Craniata</taxon>
        <taxon>Vertebrata</taxon>
        <taxon>Euteleostomi</taxon>
        <taxon>Actinopterygii</taxon>
        <taxon>Neopterygii</taxon>
        <taxon>Teleostei</taxon>
        <taxon>Ostariophysi</taxon>
        <taxon>Cypriniformes</taxon>
        <taxon>Danionidae</taxon>
        <taxon>Danioninae</taxon>
        <taxon>Danio</taxon>
    </lineage>
</organism>
<dbReference type="EMBL" id="BC064668">
    <property type="protein sequence ID" value="AAH64668.1"/>
    <property type="molecule type" value="mRNA"/>
</dbReference>
<dbReference type="EMBL" id="BC093447">
    <property type="protein sequence ID" value="AAH93447.1"/>
    <property type="molecule type" value="mRNA"/>
</dbReference>
<dbReference type="RefSeq" id="NP_001017538.1">
    <property type="nucleotide sequence ID" value="NM_001017538.2"/>
</dbReference>
<dbReference type="SMR" id="Q6P298"/>
<dbReference type="FunCoup" id="Q6P298">
    <property type="interactions" value="1246"/>
</dbReference>
<dbReference type="STRING" id="7955.ENSDARP00000129550"/>
<dbReference type="PaxDb" id="7955-ENSDARP00000129550"/>
<dbReference type="GeneID" id="503919"/>
<dbReference type="KEGG" id="dre:503919"/>
<dbReference type="AGR" id="ZFIN:ZDB-GENE-050417-471"/>
<dbReference type="CTD" id="4682"/>
<dbReference type="ZFIN" id="ZDB-GENE-050417-471">
    <property type="gene designation" value="nubp1"/>
</dbReference>
<dbReference type="eggNOG" id="KOG3022">
    <property type="taxonomic scope" value="Eukaryota"/>
</dbReference>
<dbReference type="InParanoid" id="Q6P298"/>
<dbReference type="OrthoDB" id="1741334at2759"/>
<dbReference type="PhylomeDB" id="Q6P298"/>
<dbReference type="TreeFam" id="TF300755"/>
<dbReference type="PRO" id="PR:Q6P298"/>
<dbReference type="Proteomes" id="UP000000437">
    <property type="component" value="Chromosome 3"/>
</dbReference>
<dbReference type="GO" id="GO:0005829">
    <property type="term" value="C:cytosol"/>
    <property type="evidence" value="ECO:0000250"/>
    <property type="project" value="UniProtKB"/>
</dbReference>
<dbReference type="GO" id="GO:0051539">
    <property type="term" value="F:4 iron, 4 sulfur cluster binding"/>
    <property type="evidence" value="ECO:0007669"/>
    <property type="project" value="UniProtKB-UniRule"/>
</dbReference>
<dbReference type="GO" id="GO:0005524">
    <property type="term" value="F:ATP binding"/>
    <property type="evidence" value="ECO:0007669"/>
    <property type="project" value="UniProtKB-KW"/>
</dbReference>
<dbReference type="GO" id="GO:0140663">
    <property type="term" value="F:ATP-dependent FeS chaperone activity"/>
    <property type="evidence" value="ECO:0007669"/>
    <property type="project" value="InterPro"/>
</dbReference>
<dbReference type="GO" id="GO:0051536">
    <property type="term" value="F:iron-sulfur cluster binding"/>
    <property type="evidence" value="ECO:0000250"/>
    <property type="project" value="UniProtKB"/>
</dbReference>
<dbReference type="GO" id="GO:0046872">
    <property type="term" value="F:metal ion binding"/>
    <property type="evidence" value="ECO:0007669"/>
    <property type="project" value="UniProtKB-KW"/>
</dbReference>
<dbReference type="GO" id="GO:0016226">
    <property type="term" value="P:iron-sulfur cluster assembly"/>
    <property type="evidence" value="ECO:0000250"/>
    <property type="project" value="UniProtKB"/>
</dbReference>
<dbReference type="CDD" id="cd02037">
    <property type="entry name" value="Mrp_NBP35"/>
    <property type="match status" value="1"/>
</dbReference>
<dbReference type="FunFam" id="3.40.50.300:FF:000427">
    <property type="entry name" value="Cytosolic Fe-S cluster assembly factor NUBP1"/>
    <property type="match status" value="1"/>
</dbReference>
<dbReference type="Gene3D" id="3.40.50.300">
    <property type="entry name" value="P-loop containing nucleotide triphosphate hydrolases"/>
    <property type="match status" value="1"/>
</dbReference>
<dbReference type="HAMAP" id="MF_02040">
    <property type="entry name" value="Mrp_NBP35"/>
    <property type="match status" value="1"/>
</dbReference>
<dbReference type="HAMAP" id="MF_03038">
    <property type="entry name" value="NUBP1"/>
    <property type="match status" value="1"/>
</dbReference>
<dbReference type="InterPro" id="IPR000808">
    <property type="entry name" value="Mrp-like_CS"/>
</dbReference>
<dbReference type="InterPro" id="IPR019591">
    <property type="entry name" value="Mrp/NBP35_ATP-bd"/>
</dbReference>
<dbReference type="InterPro" id="IPR028601">
    <property type="entry name" value="NUBP1/Nbp35"/>
</dbReference>
<dbReference type="InterPro" id="IPR027417">
    <property type="entry name" value="P-loop_NTPase"/>
</dbReference>
<dbReference type="InterPro" id="IPR033756">
    <property type="entry name" value="YlxH/NBP35"/>
</dbReference>
<dbReference type="PANTHER" id="PTHR23264:SF35">
    <property type="entry name" value="CYTOSOLIC FE-S CLUSTER ASSEMBLY FACTOR NUBP1"/>
    <property type="match status" value="1"/>
</dbReference>
<dbReference type="PANTHER" id="PTHR23264">
    <property type="entry name" value="NUCLEOTIDE-BINDING PROTEIN NBP35 YEAST -RELATED"/>
    <property type="match status" value="1"/>
</dbReference>
<dbReference type="Pfam" id="PF10609">
    <property type="entry name" value="ParA"/>
    <property type="match status" value="1"/>
</dbReference>
<dbReference type="SUPFAM" id="SSF52540">
    <property type="entry name" value="P-loop containing nucleoside triphosphate hydrolases"/>
    <property type="match status" value="1"/>
</dbReference>
<dbReference type="PROSITE" id="PS01215">
    <property type="entry name" value="MRP"/>
    <property type="match status" value="1"/>
</dbReference>
<sequence length="321" mass="34112">MADVPNDAPEHCPGTSSDQAGKSSACQGCPNQSICASGATKAPDPAIEEIKQKMTSVKHKILVLSGKGGVGKSTFSAHLSHALASDSSKEVALLDVDICGPSIPKIMGLEGEQVHQSGSGWSPVYVEDNLAVMSIGFLLSSPDDAVIWRGPKKNGMIKQFLRDVDWGEVDYLIVDTPPGTSDEHLSIVQYLSGAGIDGAVIITTPQEVSLQDVRKEIRFCKKVNLPILGVIENMSGFVCPKCKNTSQIFPPTTGGAQRMCEELNLPLLGRIPLDPRIGKSCDEGKSFLTEVPDSPAAAAYQSIVQKIRDYCASHSASDDSC</sequence>
<feature type="chain" id="PRO_0000382592" description="Cytosolic Fe-S cluster assembly factor nubp1">
    <location>
        <begin position="1"/>
        <end position="321"/>
    </location>
</feature>
<feature type="region of interest" description="Disordered" evidence="2">
    <location>
        <begin position="1"/>
        <end position="23"/>
    </location>
</feature>
<feature type="compositionally biased region" description="Polar residues" evidence="2">
    <location>
        <begin position="14"/>
        <end position="23"/>
    </location>
</feature>
<feature type="binding site" evidence="1">
    <location>
        <position position="12"/>
    </location>
    <ligand>
        <name>[4Fe-4S] cluster</name>
        <dbReference type="ChEBI" id="CHEBI:49883"/>
        <label>1</label>
    </ligand>
</feature>
<feature type="binding site" evidence="1">
    <location>
        <position position="26"/>
    </location>
    <ligand>
        <name>[4Fe-4S] cluster</name>
        <dbReference type="ChEBI" id="CHEBI:49883"/>
        <label>1</label>
    </ligand>
</feature>
<feature type="binding site" evidence="1">
    <location>
        <position position="29"/>
    </location>
    <ligand>
        <name>[4Fe-4S] cluster</name>
        <dbReference type="ChEBI" id="CHEBI:49883"/>
        <label>1</label>
    </ligand>
</feature>
<feature type="binding site" evidence="1">
    <location>
        <position position="35"/>
    </location>
    <ligand>
        <name>[4Fe-4S] cluster</name>
        <dbReference type="ChEBI" id="CHEBI:49883"/>
        <label>1</label>
    </ligand>
</feature>
<feature type="binding site" evidence="1">
    <location>
        <begin position="66"/>
        <end position="73"/>
    </location>
    <ligand>
        <name>ATP</name>
        <dbReference type="ChEBI" id="CHEBI:30616"/>
    </ligand>
</feature>
<feature type="binding site" evidence="1">
    <location>
        <position position="239"/>
    </location>
    <ligand>
        <name>[4Fe-4S] cluster</name>
        <dbReference type="ChEBI" id="CHEBI:49883"/>
        <label>2</label>
        <note>ligand shared with heterodimeric partner</note>
    </ligand>
</feature>
<feature type="binding site" evidence="1">
    <location>
        <position position="242"/>
    </location>
    <ligand>
        <name>[4Fe-4S] cluster</name>
        <dbReference type="ChEBI" id="CHEBI:49883"/>
        <label>2</label>
        <note>ligand shared with heterodimeric partner</note>
    </ligand>
</feature>
<feature type="sequence conflict" description="In Ref. 1; AAH64668." evidence="3" ref="1">
    <original>I</original>
    <variation>V</variation>
    <location>
        <position position="202"/>
    </location>
</feature>
<feature type="sequence conflict" description="In Ref. 1; AAH64668." evidence="3" ref="1">
    <original>V</original>
    <variation>I</variation>
    <location>
        <position position="238"/>
    </location>
</feature>
<feature type="sequence conflict" description="In Ref. 1; AAH93447." evidence="3" ref="1">
    <original>D</original>
    <variation>V</variation>
    <location>
        <position position="319"/>
    </location>
</feature>
<gene>
    <name type="primary">nubp1</name>
    <name type="ORF">zgc:92138</name>
</gene>
<keyword id="KW-0004">4Fe-4S</keyword>
<keyword id="KW-0067">ATP-binding</keyword>
<keyword id="KW-0963">Cytoplasm</keyword>
<keyword id="KW-0408">Iron</keyword>
<keyword id="KW-0411">Iron-sulfur</keyword>
<keyword id="KW-0479">Metal-binding</keyword>
<keyword id="KW-0547">Nucleotide-binding</keyword>
<keyword id="KW-1185">Reference proteome</keyword>
<proteinExistence type="evidence at transcript level"/>
<name>NUBP1_DANRE</name>
<comment type="function">
    <text evidence="1">Component of the cytosolic iron-sulfur (Fe/S) protein assembly (CIA) machinery. Required for maturation of extramitochondrial Fe-S proteins. The nubp1-nubp2 heterotetramer forms a Fe-S scaffold complex, mediating the de novo assembly of an Fe-S cluster and its transfer to target apoproteins.</text>
</comment>
<comment type="cofactor">
    <cofactor evidence="1">
        <name>[4Fe-4S] cluster</name>
        <dbReference type="ChEBI" id="CHEBI:49883"/>
    </cofactor>
    <text evidence="1">Binds 4 [4Fe-4S] clusters per heterotetramer. Contains two stable clusters in the N-termini of nubp1 and two labile, bridging clusters between subunits of the nubp1-nubp2 heterotetramer.</text>
</comment>
<comment type="subunit">
    <text evidence="1">Heterotetramer of 2 nubp1 and 2 nubp2 chains.</text>
</comment>
<comment type="subcellular location">
    <subcellularLocation>
        <location evidence="1">Cytoplasm</location>
    </subcellularLocation>
</comment>
<comment type="similarity">
    <text evidence="1">Belongs to the Mrp/NBP35 ATP-binding proteins family. NUBP1/NBP35 subfamily.</text>
</comment>
<reference key="1">
    <citation type="submission" date="2005-04" db="EMBL/GenBank/DDBJ databases">
        <authorList>
            <consortium name="NIH - Zebrafish Gene Collection (ZGC) project"/>
        </authorList>
    </citation>
    <scope>NUCLEOTIDE SEQUENCE [LARGE SCALE MRNA]</scope>
    <source>
        <tissue>Kidney</tissue>
    </source>
</reference>
<evidence type="ECO:0000255" key="1">
    <source>
        <dbReference type="HAMAP-Rule" id="MF_03038"/>
    </source>
</evidence>
<evidence type="ECO:0000256" key="2">
    <source>
        <dbReference type="SAM" id="MobiDB-lite"/>
    </source>
</evidence>
<evidence type="ECO:0000305" key="3"/>
<protein>
    <recommendedName>
        <fullName evidence="1">Cytosolic Fe-S cluster assembly factor nubp1</fullName>
    </recommendedName>
    <alternativeName>
        <fullName evidence="1">Nucleotide-binding protein 1</fullName>
        <shortName evidence="1">NBP 1</shortName>
    </alternativeName>
</protein>